<protein>
    <recommendedName>
        <fullName>Tubby-like F-box protein 13</fullName>
        <shortName>OsTLP13</shortName>
    </recommendedName>
    <alternativeName>
        <fullName>Tubby-like F-box protein 6</fullName>
        <shortName>OsTLP6</shortName>
    </alternativeName>
</protein>
<gene>
    <name type="primary">TULP13</name>
    <name type="synonym">TULP6</name>
    <name type="ordered locus">Os11g0163600</name>
    <name type="ordered locus">LOC_Os11g06420</name>
    <name type="ORF">OsJ_33072</name>
</gene>
<organism>
    <name type="scientific">Oryza sativa subsp. japonica</name>
    <name type="common">Rice</name>
    <dbReference type="NCBI Taxonomy" id="39947"/>
    <lineage>
        <taxon>Eukaryota</taxon>
        <taxon>Viridiplantae</taxon>
        <taxon>Streptophyta</taxon>
        <taxon>Embryophyta</taxon>
        <taxon>Tracheophyta</taxon>
        <taxon>Spermatophyta</taxon>
        <taxon>Magnoliopsida</taxon>
        <taxon>Liliopsida</taxon>
        <taxon>Poales</taxon>
        <taxon>Poaceae</taxon>
        <taxon>BOP clade</taxon>
        <taxon>Oryzoideae</taxon>
        <taxon>Oryzeae</taxon>
        <taxon>Oryzinae</taxon>
        <taxon>Oryza</taxon>
        <taxon>Oryza sativa</taxon>
    </lineage>
</organism>
<proteinExistence type="evidence at transcript level"/>
<comment type="alternative products">
    <event type="alternative splicing"/>
    <isoform>
        <id>Q53PP5-1</id>
        <name>1</name>
        <sequence type="displayed"/>
    </isoform>
    <isoform>
        <id>Q53PP5-2</id>
        <name>2</name>
        <sequence type="described" ref="VSP_035470"/>
    </isoform>
</comment>
<comment type="tissue specificity">
    <text evidence="1">Ubiquitous.</text>
</comment>
<comment type="similarity">
    <text evidence="3">Belongs to the TUB family.</text>
</comment>
<feature type="chain" id="PRO_0000351132" description="Tubby-like F-box protein 13">
    <location>
        <begin position="1"/>
        <end position="440"/>
    </location>
</feature>
<feature type="domain" description="F-box">
    <location>
        <begin position="51"/>
        <end position="106"/>
    </location>
</feature>
<feature type="splice variant" id="VSP_035470" description="In isoform 2." evidence="2">
    <location>
        <begin position="1"/>
        <end position="123"/>
    </location>
</feature>
<sequence length="440" mass="48956">MSFRSIVRDVRDGFGSLSRRGFEVRILGHRRGKSHGAVHELHDPVPVIQSSCWASLPPELLRDIIERLEESEATWPSRKHVVACAGVCRTWREMCKEIVKNPELCGKITFPISLRQPGPRDGTMQCFIRRDKSTQTYYLYLSLGSAVLVDNGKFLLSAKRNWHATCTEYVISMNANNLSRSTNTNIGKLRSNFLGTKFVIYDTHTPYNATSDSQSGKTSRRFSNKGTAKHPCSTYSIANISYELNVFGTRGPRRMCCLMHSIPASSLEAGGTVPSQPDSILAHSLNESSFRSVSFSKSSVMDHSMHFSSAQFSDISIGDGPRIGGRVLSDDEECKETPLILQNKAPRWHEQLQCWCLNFRGRVTVASVKNFQLIAATQPAAGAPTPSQPVPPPPPEHDKVILQFGKVAKDMFTMDYHYPLSAFQAFAISLSSFDTKLACE</sequence>
<keyword id="KW-0025">Alternative splicing</keyword>
<keyword id="KW-1185">Reference proteome</keyword>
<accession>Q53PP5</accession>
<accession>B7EHE4</accession>
<accession>Q0IUD8</accession>
<accession>Q53PP4</accession>
<dbReference type="EMBL" id="AC120533">
    <property type="protein sequence ID" value="AAX95105.1"/>
    <property type="molecule type" value="Genomic_DNA"/>
</dbReference>
<dbReference type="EMBL" id="AC120533">
    <property type="protein sequence ID" value="AAX95106.1"/>
    <property type="molecule type" value="Genomic_DNA"/>
</dbReference>
<dbReference type="EMBL" id="DP000010">
    <property type="protein sequence ID" value="ABA91673.1"/>
    <property type="molecule type" value="Genomic_DNA"/>
</dbReference>
<dbReference type="EMBL" id="DP000010">
    <property type="protein sequence ID" value="ABA91674.1"/>
    <property type="molecule type" value="Genomic_DNA"/>
</dbReference>
<dbReference type="EMBL" id="AP008217">
    <property type="protein sequence ID" value="BAF27677.2"/>
    <property type="molecule type" value="Genomic_DNA"/>
</dbReference>
<dbReference type="EMBL" id="AP014967">
    <property type="status" value="NOT_ANNOTATED_CDS"/>
    <property type="molecule type" value="Genomic_DNA"/>
</dbReference>
<dbReference type="EMBL" id="CM000148">
    <property type="protein sequence ID" value="EAZ17539.1"/>
    <property type="molecule type" value="Genomic_DNA"/>
</dbReference>
<dbReference type="EMBL" id="AK070139">
    <property type="protein sequence ID" value="BAG91791.1"/>
    <property type="molecule type" value="mRNA"/>
</dbReference>
<dbReference type="RefSeq" id="XP_015618033.1">
    <property type="nucleotide sequence ID" value="XM_015762547.1"/>
</dbReference>
<dbReference type="RefSeq" id="XP_015618035.1">
    <property type="nucleotide sequence ID" value="XM_015762549.1"/>
</dbReference>
<dbReference type="SMR" id="Q53PP5"/>
<dbReference type="FunCoup" id="Q53PP5">
    <property type="interactions" value="1179"/>
</dbReference>
<dbReference type="STRING" id="39947.Q53PP5"/>
<dbReference type="PaxDb" id="39947-Q53PP5"/>
<dbReference type="KEGG" id="dosa:Os11g0163600"/>
<dbReference type="InParanoid" id="Q53PP5"/>
<dbReference type="OrthoDB" id="8775810at2759"/>
<dbReference type="Proteomes" id="UP000000763">
    <property type="component" value="Chromosome 11"/>
</dbReference>
<dbReference type="Proteomes" id="UP000007752">
    <property type="component" value="Chromosome 11"/>
</dbReference>
<dbReference type="Proteomes" id="UP000059680">
    <property type="component" value="Chromosome 11"/>
</dbReference>
<dbReference type="CDD" id="cd22153">
    <property type="entry name" value="F-box_AtTLP-like"/>
    <property type="match status" value="1"/>
</dbReference>
<dbReference type="FunFam" id="1.20.1280.50:FF:000047">
    <property type="entry name" value="Tubby-like F-box protein"/>
    <property type="match status" value="1"/>
</dbReference>
<dbReference type="Gene3D" id="1.20.1280.50">
    <property type="match status" value="1"/>
</dbReference>
<dbReference type="Gene3D" id="3.20.90.10">
    <property type="entry name" value="Tubby Protein, Chain A"/>
    <property type="match status" value="2"/>
</dbReference>
<dbReference type="InterPro" id="IPR036047">
    <property type="entry name" value="F-box-like_dom_sf"/>
</dbReference>
<dbReference type="InterPro" id="IPR001810">
    <property type="entry name" value="F-box_dom"/>
</dbReference>
<dbReference type="InterPro" id="IPR025659">
    <property type="entry name" value="Tubby-like_C"/>
</dbReference>
<dbReference type="InterPro" id="IPR000007">
    <property type="entry name" value="Tubby_C"/>
</dbReference>
<dbReference type="InterPro" id="IPR018066">
    <property type="entry name" value="Tubby_C_CS"/>
</dbReference>
<dbReference type="PANTHER" id="PTHR16517:SF126">
    <property type="entry name" value="TUBBY-LIKE F-BOX PROTEIN 13"/>
    <property type="match status" value="1"/>
</dbReference>
<dbReference type="PANTHER" id="PTHR16517">
    <property type="entry name" value="TUBBY-RELATED"/>
    <property type="match status" value="1"/>
</dbReference>
<dbReference type="Pfam" id="PF12937">
    <property type="entry name" value="F-box-like"/>
    <property type="match status" value="1"/>
</dbReference>
<dbReference type="Pfam" id="PF01167">
    <property type="entry name" value="Tub"/>
    <property type="match status" value="1"/>
</dbReference>
<dbReference type="PRINTS" id="PR01573">
    <property type="entry name" value="SUPERTUBBY"/>
</dbReference>
<dbReference type="SUPFAM" id="SSF81383">
    <property type="entry name" value="F-box domain"/>
    <property type="match status" value="1"/>
</dbReference>
<dbReference type="SUPFAM" id="SSF54518">
    <property type="entry name" value="Tubby C-terminal domain-like"/>
    <property type="match status" value="1"/>
</dbReference>
<dbReference type="PROSITE" id="PS01200">
    <property type="entry name" value="TUB_1"/>
    <property type="match status" value="1"/>
</dbReference>
<dbReference type="PROSITE" id="PS01201">
    <property type="entry name" value="TUB_2"/>
    <property type="match status" value="1"/>
</dbReference>
<evidence type="ECO:0000269" key="1">
    <source>
    </source>
</evidence>
<evidence type="ECO:0000303" key="2">
    <source>
    </source>
</evidence>
<evidence type="ECO:0000305" key="3"/>
<name>TLP13_ORYSJ</name>
<reference key="1">
    <citation type="journal article" date="2005" name="BMC Biol.">
        <title>The sequence of rice chromosomes 11 and 12, rich in disease resistance genes and recent gene duplications.</title>
        <authorList>
            <consortium name="The rice chromosomes 11 and 12 sequencing consortia"/>
        </authorList>
    </citation>
    <scope>NUCLEOTIDE SEQUENCE [LARGE SCALE GENOMIC DNA]</scope>
    <source>
        <strain>cv. Nipponbare</strain>
    </source>
</reference>
<reference key="2">
    <citation type="journal article" date="2005" name="Nature">
        <title>The map-based sequence of the rice genome.</title>
        <authorList>
            <consortium name="International rice genome sequencing project (IRGSP)"/>
        </authorList>
    </citation>
    <scope>NUCLEOTIDE SEQUENCE [LARGE SCALE GENOMIC DNA]</scope>
    <source>
        <strain>cv. Nipponbare</strain>
    </source>
</reference>
<reference key="3">
    <citation type="journal article" date="2008" name="Nucleic Acids Res.">
        <title>The rice annotation project database (RAP-DB): 2008 update.</title>
        <authorList>
            <consortium name="The rice annotation project (RAP)"/>
        </authorList>
    </citation>
    <scope>GENOME REANNOTATION</scope>
    <source>
        <strain>cv. Nipponbare</strain>
    </source>
</reference>
<reference key="4">
    <citation type="journal article" date="2013" name="Rice">
        <title>Improvement of the Oryza sativa Nipponbare reference genome using next generation sequence and optical map data.</title>
        <authorList>
            <person name="Kawahara Y."/>
            <person name="de la Bastide M."/>
            <person name="Hamilton J.P."/>
            <person name="Kanamori H."/>
            <person name="McCombie W.R."/>
            <person name="Ouyang S."/>
            <person name="Schwartz D.C."/>
            <person name="Tanaka T."/>
            <person name="Wu J."/>
            <person name="Zhou S."/>
            <person name="Childs K.L."/>
            <person name="Davidson R.M."/>
            <person name="Lin H."/>
            <person name="Quesada-Ocampo L."/>
            <person name="Vaillancourt B."/>
            <person name="Sakai H."/>
            <person name="Lee S.S."/>
            <person name="Kim J."/>
            <person name="Numa H."/>
            <person name="Itoh T."/>
            <person name="Buell C.R."/>
            <person name="Matsumoto T."/>
        </authorList>
    </citation>
    <scope>GENOME REANNOTATION</scope>
    <source>
        <strain>cv. Nipponbare</strain>
    </source>
</reference>
<reference key="5">
    <citation type="journal article" date="2005" name="PLoS Biol.">
        <title>The genomes of Oryza sativa: a history of duplications.</title>
        <authorList>
            <person name="Yu J."/>
            <person name="Wang J."/>
            <person name="Lin W."/>
            <person name="Li S."/>
            <person name="Li H."/>
            <person name="Zhou J."/>
            <person name="Ni P."/>
            <person name="Dong W."/>
            <person name="Hu S."/>
            <person name="Zeng C."/>
            <person name="Zhang J."/>
            <person name="Zhang Y."/>
            <person name="Li R."/>
            <person name="Xu Z."/>
            <person name="Li S."/>
            <person name="Li X."/>
            <person name="Zheng H."/>
            <person name="Cong L."/>
            <person name="Lin L."/>
            <person name="Yin J."/>
            <person name="Geng J."/>
            <person name="Li G."/>
            <person name="Shi J."/>
            <person name="Liu J."/>
            <person name="Lv H."/>
            <person name="Li J."/>
            <person name="Wang J."/>
            <person name="Deng Y."/>
            <person name="Ran L."/>
            <person name="Shi X."/>
            <person name="Wang X."/>
            <person name="Wu Q."/>
            <person name="Li C."/>
            <person name="Ren X."/>
            <person name="Wang J."/>
            <person name="Wang X."/>
            <person name="Li D."/>
            <person name="Liu D."/>
            <person name="Zhang X."/>
            <person name="Ji Z."/>
            <person name="Zhao W."/>
            <person name="Sun Y."/>
            <person name="Zhang Z."/>
            <person name="Bao J."/>
            <person name="Han Y."/>
            <person name="Dong L."/>
            <person name="Ji J."/>
            <person name="Chen P."/>
            <person name="Wu S."/>
            <person name="Liu J."/>
            <person name="Xiao Y."/>
            <person name="Bu D."/>
            <person name="Tan J."/>
            <person name="Yang L."/>
            <person name="Ye C."/>
            <person name="Zhang J."/>
            <person name="Xu J."/>
            <person name="Zhou Y."/>
            <person name="Yu Y."/>
            <person name="Zhang B."/>
            <person name="Zhuang S."/>
            <person name="Wei H."/>
            <person name="Liu B."/>
            <person name="Lei M."/>
            <person name="Yu H."/>
            <person name="Li Y."/>
            <person name="Xu H."/>
            <person name="Wei S."/>
            <person name="He X."/>
            <person name="Fang L."/>
            <person name="Zhang Z."/>
            <person name="Zhang Y."/>
            <person name="Huang X."/>
            <person name="Su Z."/>
            <person name="Tong W."/>
            <person name="Li J."/>
            <person name="Tong Z."/>
            <person name="Li S."/>
            <person name="Ye J."/>
            <person name="Wang L."/>
            <person name="Fang L."/>
            <person name="Lei T."/>
            <person name="Chen C.-S."/>
            <person name="Chen H.-C."/>
            <person name="Xu Z."/>
            <person name="Li H."/>
            <person name="Huang H."/>
            <person name="Zhang F."/>
            <person name="Xu H."/>
            <person name="Li N."/>
            <person name="Zhao C."/>
            <person name="Li S."/>
            <person name="Dong L."/>
            <person name="Huang Y."/>
            <person name="Li L."/>
            <person name="Xi Y."/>
            <person name="Qi Q."/>
            <person name="Li W."/>
            <person name="Zhang B."/>
            <person name="Hu W."/>
            <person name="Zhang Y."/>
            <person name="Tian X."/>
            <person name="Jiao Y."/>
            <person name="Liang X."/>
            <person name="Jin J."/>
            <person name="Gao L."/>
            <person name="Zheng W."/>
            <person name="Hao B."/>
            <person name="Liu S.-M."/>
            <person name="Wang W."/>
            <person name="Yuan L."/>
            <person name="Cao M."/>
            <person name="McDermott J."/>
            <person name="Samudrala R."/>
            <person name="Wang J."/>
            <person name="Wong G.K.-S."/>
            <person name="Yang H."/>
        </authorList>
    </citation>
    <scope>NUCLEOTIDE SEQUENCE [LARGE SCALE GENOMIC DNA]</scope>
    <source>
        <strain>cv. Nipponbare</strain>
    </source>
</reference>
<reference key="6">
    <citation type="journal article" date="2003" name="Science">
        <title>Collection, mapping, and annotation of over 28,000 cDNA clones from japonica rice.</title>
        <authorList>
            <consortium name="The rice full-length cDNA consortium"/>
        </authorList>
    </citation>
    <scope>NUCLEOTIDE SEQUENCE [LARGE SCALE MRNA] (ISOFORM 2)</scope>
    <source>
        <strain>cv. Nipponbare</strain>
    </source>
</reference>
<reference key="7">
    <citation type="journal article" date="2008" name="FEBS J.">
        <title>Identification of rice TUBBY-like genes and their evolution.</title>
        <authorList>
            <person name="Liu Q."/>
        </authorList>
    </citation>
    <scope>GENE FAMILY</scope>
    <scope>NOMENCLATURE</scope>
</reference>
<reference key="8">
    <citation type="journal article" date="2008" name="Genomics">
        <title>Genomewide comparative phylogenetic and molecular evolutionary analysis of tubby-like protein family in Arabidopsis, rice, and poplar.</title>
        <authorList>
            <person name="Yang Z."/>
            <person name="Zhou Y."/>
            <person name="Wang X."/>
            <person name="Gu S."/>
            <person name="Yu J."/>
            <person name="Liang G."/>
            <person name="Yan C."/>
            <person name="Xu C."/>
        </authorList>
    </citation>
    <scope>TISSUE SPECIFICITY</scope>
    <scope>GENE FAMILY</scope>
    <scope>NOMENCLATURE</scope>
</reference>